<comment type="function">
    <text evidence="1">Catalyzes the synthesis of GMP from XMP.</text>
</comment>
<comment type="catalytic activity">
    <reaction evidence="1">
        <text>XMP + L-glutamine + ATP + H2O = GMP + L-glutamate + AMP + diphosphate + 2 H(+)</text>
        <dbReference type="Rhea" id="RHEA:11680"/>
        <dbReference type="ChEBI" id="CHEBI:15377"/>
        <dbReference type="ChEBI" id="CHEBI:15378"/>
        <dbReference type="ChEBI" id="CHEBI:29985"/>
        <dbReference type="ChEBI" id="CHEBI:30616"/>
        <dbReference type="ChEBI" id="CHEBI:33019"/>
        <dbReference type="ChEBI" id="CHEBI:57464"/>
        <dbReference type="ChEBI" id="CHEBI:58115"/>
        <dbReference type="ChEBI" id="CHEBI:58359"/>
        <dbReference type="ChEBI" id="CHEBI:456215"/>
        <dbReference type="EC" id="6.3.5.2"/>
    </reaction>
</comment>
<comment type="pathway">
    <text evidence="1">Purine metabolism; GMP biosynthesis; GMP from XMP (L-Gln route): step 1/1.</text>
</comment>
<comment type="subunit">
    <text evidence="1">Homodimer.</text>
</comment>
<dbReference type="EC" id="6.3.5.2" evidence="1"/>
<dbReference type="EMBL" id="CP001283">
    <property type="protein sequence ID" value="ACK92507.1"/>
    <property type="molecule type" value="Genomic_DNA"/>
</dbReference>
<dbReference type="SMR" id="B7JM61"/>
<dbReference type="MEROPS" id="C26.957"/>
<dbReference type="KEGG" id="bcu:BCAH820_0294"/>
<dbReference type="HOGENOM" id="CLU_014340_0_5_9"/>
<dbReference type="UniPathway" id="UPA00189">
    <property type="reaction ID" value="UER00296"/>
</dbReference>
<dbReference type="Proteomes" id="UP000001363">
    <property type="component" value="Chromosome"/>
</dbReference>
<dbReference type="GO" id="GO:0005829">
    <property type="term" value="C:cytosol"/>
    <property type="evidence" value="ECO:0007669"/>
    <property type="project" value="TreeGrafter"/>
</dbReference>
<dbReference type="GO" id="GO:0005524">
    <property type="term" value="F:ATP binding"/>
    <property type="evidence" value="ECO:0007669"/>
    <property type="project" value="UniProtKB-UniRule"/>
</dbReference>
<dbReference type="GO" id="GO:0003921">
    <property type="term" value="F:GMP synthase activity"/>
    <property type="evidence" value="ECO:0007669"/>
    <property type="project" value="InterPro"/>
</dbReference>
<dbReference type="CDD" id="cd01742">
    <property type="entry name" value="GATase1_GMP_Synthase"/>
    <property type="match status" value="1"/>
</dbReference>
<dbReference type="CDD" id="cd01997">
    <property type="entry name" value="GMP_synthase_C"/>
    <property type="match status" value="1"/>
</dbReference>
<dbReference type="FunFam" id="3.30.300.10:FF:000002">
    <property type="entry name" value="GMP synthase [glutamine-hydrolyzing]"/>
    <property type="match status" value="1"/>
</dbReference>
<dbReference type="FunFam" id="3.40.50.620:FF:000001">
    <property type="entry name" value="GMP synthase [glutamine-hydrolyzing]"/>
    <property type="match status" value="1"/>
</dbReference>
<dbReference type="FunFam" id="3.40.50.880:FF:000001">
    <property type="entry name" value="GMP synthase [glutamine-hydrolyzing]"/>
    <property type="match status" value="1"/>
</dbReference>
<dbReference type="Gene3D" id="3.30.300.10">
    <property type="match status" value="1"/>
</dbReference>
<dbReference type="Gene3D" id="3.40.50.880">
    <property type="match status" value="1"/>
</dbReference>
<dbReference type="Gene3D" id="3.40.50.620">
    <property type="entry name" value="HUPs"/>
    <property type="match status" value="1"/>
</dbReference>
<dbReference type="HAMAP" id="MF_00344">
    <property type="entry name" value="GMP_synthase"/>
    <property type="match status" value="1"/>
</dbReference>
<dbReference type="InterPro" id="IPR029062">
    <property type="entry name" value="Class_I_gatase-like"/>
</dbReference>
<dbReference type="InterPro" id="IPR017926">
    <property type="entry name" value="GATASE"/>
</dbReference>
<dbReference type="InterPro" id="IPR001674">
    <property type="entry name" value="GMP_synth_C"/>
</dbReference>
<dbReference type="InterPro" id="IPR004739">
    <property type="entry name" value="GMP_synth_GATase"/>
</dbReference>
<dbReference type="InterPro" id="IPR022955">
    <property type="entry name" value="GMP_synthase"/>
</dbReference>
<dbReference type="InterPro" id="IPR025777">
    <property type="entry name" value="GMPS_ATP_PPase_dom"/>
</dbReference>
<dbReference type="InterPro" id="IPR022310">
    <property type="entry name" value="NAD/GMP_synthase"/>
</dbReference>
<dbReference type="InterPro" id="IPR014729">
    <property type="entry name" value="Rossmann-like_a/b/a_fold"/>
</dbReference>
<dbReference type="NCBIfam" id="TIGR00884">
    <property type="entry name" value="guaA_Cterm"/>
    <property type="match status" value="1"/>
</dbReference>
<dbReference type="NCBIfam" id="TIGR00888">
    <property type="entry name" value="guaA_Nterm"/>
    <property type="match status" value="1"/>
</dbReference>
<dbReference type="NCBIfam" id="NF000848">
    <property type="entry name" value="PRK00074.1"/>
    <property type="match status" value="1"/>
</dbReference>
<dbReference type="PANTHER" id="PTHR11922:SF2">
    <property type="entry name" value="GMP SYNTHASE [GLUTAMINE-HYDROLYZING]"/>
    <property type="match status" value="1"/>
</dbReference>
<dbReference type="PANTHER" id="PTHR11922">
    <property type="entry name" value="GMP SYNTHASE-RELATED"/>
    <property type="match status" value="1"/>
</dbReference>
<dbReference type="Pfam" id="PF00117">
    <property type="entry name" value="GATase"/>
    <property type="match status" value="1"/>
</dbReference>
<dbReference type="Pfam" id="PF00958">
    <property type="entry name" value="GMP_synt_C"/>
    <property type="match status" value="1"/>
</dbReference>
<dbReference type="Pfam" id="PF02540">
    <property type="entry name" value="NAD_synthase"/>
    <property type="match status" value="1"/>
</dbReference>
<dbReference type="PRINTS" id="PR00097">
    <property type="entry name" value="ANTSNTHASEII"/>
</dbReference>
<dbReference type="PRINTS" id="PR00099">
    <property type="entry name" value="CPSGATASE"/>
</dbReference>
<dbReference type="PRINTS" id="PR00096">
    <property type="entry name" value="GATASE"/>
</dbReference>
<dbReference type="SUPFAM" id="SSF52402">
    <property type="entry name" value="Adenine nucleotide alpha hydrolases-like"/>
    <property type="match status" value="1"/>
</dbReference>
<dbReference type="SUPFAM" id="SSF52317">
    <property type="entry name" value="Class I glutamine amidotransferase-like"/>
    <property type="match status" value="1"/>
</dbReference>
<dbReference type="SUPFAM" id="SSF54810">
    <property type="entry name" value="GMP synthetase C-terminal dimerisation domain"/>
    <property type="match status" value="1"/>
</dbReference>
<dbReference type="PROSITE" id="PS51273">
    <property type="entry name" value="GATASE_TYPE_1"/>
    <property type="match status" value="1"/>
</dbReference>
<dbReference type="PROSITE" id="PS51553">
    <property type="entry name" value="GMPS_ATP_PPASE"/>
    <property type="match status" value="1"/>
</dbReference>
<proteinExistence type="inferred from homology"/>
<reference key="1">
    <citation type="submission" date="2008-10" db="EMBL/GenBank/DDBJ databases">
        <title>Genome sequence of Bacillus cereus AH820.</title>
        <authorList>
            <person name="Dodson R.J."/>
            <person name="Durkin A.S."/>
            <person name="Rosovitz M.J."/>
            <person name="Rasko D.A."/>
            <person name="Hoffmaster A."/>
            <person name="Ravel J."/>
            <person name="Sutton G."/>
        </authorList>
    </citation>
    <scope>NUCLEOTIDE SEQUENCE [LARGE SCALE GENOMIC DNA]</scope>
    <source>
        <strain>AH820</strain>
    </source>
</reference>
<evidence type="ECO:0000255" key="1">
    <source>
        <dbReference type="HAMAP-Rule" id="MF_00344"/>
    </source>
</evidence>
<feature type="chain" id="PRO_1000120213" description="GMP synthase [glutamine-hydrolyzing]">
    <location>
        <begin position="1"/>
        <end position="512"/>
    </location>
</feature>
<feature type="domain" description="Glutamine amidotransferase type-1" evidence="1">
    <location>
        <begin position="7"/>
        <end position="197"/>
    </location>
</feature>
<feature type="domain" description="GMPS ATP-PPase" evidence="1">
    <location>
        <begin position="198"/>
        <end position="387"/>
    </location>
</feature>
<feature type="active site" description="Nucleophile" evidence="1">
    <location>
        <position position="84"/>
    </location>
</feature>
<feature type="active site" evidence="1">
    <location>
        <position position="171"/>
    </location>
</feature>
<feature type="active site" evidence="1">
    <location>
        <position position="173"/>
    </location>
</feature>
<feature type="binding site" evidence="1">
    <location>
        <begin position="225"/>
        <end position="231"/>
    </location>
    <ligand>
        <name>ATP</name>
        <dbReference type="ChEBI" id="CHEBI:30616"/>
    </ligand>
</feature>
<keyword id="KW-0067">ATP-binding</keyword>
<keyword id="KW-0315">Glutamine amidotransferase</keyword>
<keyword id="KW-0332">GMP biosynthesis</keyword>
<keyword id="KW-0436">Ligase</keyword>
<keyword id="KW-0547">Nucleotide-binding</keyword>
<keyword id="KW-0658">Purine biosynthesis</keyword>
<protein>
    <recommendedName>
        <fullName evidence="1">GMP synthase [glutamine-hydrolyzing]</fullName>
        <ecNumber evidence="1">6.3.5.2</ecNumber>
    </recommendedName>
    <alternativeName>
        <fullName evidence="1">GMP synthetase</fullName>
    </alternativeName>
    <alternativeName>
        <fullName evidence="1">Glutamine amidotransferase</fullName>
    </alternativeName>
</protein>
<accession>B7JM61</accession>
<organism>
    <name type="scientific">Bacillus cereus (strain AH820)</name>
    <dbReference type="NCBI Taxonomy" id="405535"/>
    <lineage>
        <taxon>Bacteria</taxon>
        <taxon>Bacillati</taxon>
        <taxon>Bacillota</taxon>
        <taxon>Bacilli</taxon>
        <taxon>Bacillales</taxon>
        <taxon>Bacillaceae</taxon>
        <taxon>Bacillus</taxon>
        <taxon>Bacillus cereus group</taxon>
    </lineage>
</organism>
<name>GUAA_BACC0</name>
<gene>
    <name evidence="1" type="primary">guaA</name>
    <name type="ordered locus">BCAH820_0294</name>
</gene>
<sequence>MKKQHDTIIVLDFGSQYNQLIARRIREFGVYSELHPHTITAEEIKAMNPKGIIFSGGPNSVYGEGALHCDEKIFDLGLPIFGICYGMQLMTQQFGGTVERANHREYGKAVLKVENESKLYANLPEEQVVWMSHGDLVTGLPEGFVVDATSESCPIAGMSNEAKNLYGVQFHPEVRHSEHGNDLIKNFVFGVCGCSEGWNMENFIEVELEKIRETVGDKKVLCALSGGVDSSVVAVLIHKAIGDQLTCIFVDHGLLRKGEAEGVMKTFSEGFHMNVIKVDAKERFMNKLKGVEDPEQKRKIIGNEFIYVFDDEASKLEGMDFLAQGTLYTDIVESGTATAQTIKSHHNVGGLPEDMQFKLIEPLNTLFKDEVRVLGSELGIPDEIVWRQPFPGPGLGIRVLGEITEEKLEIVRESDAILREEIIKAGLDREIWQYFTALPGMRSVGVMGDERTYDYTVGIRAVTSIDGMTADWARIPWDVLEKISVRIVNEVKHVNRIVYDVTSKPPATIEWE</sequence>